<comment type="function">
    <text evidence="1">Factor of infectivity and pathogenicity, required for optimal virus replication. Alters numerous pathways of T-lymphocyte function and down-regulates immunity surface molecules in order to evade host defense and increase viral infectivity. Alters the functionality of other immunity cells, like dendritic cells, monocytes/macrophages and NK cells.</text>
</comment>
<comment type="function">
    <text evidence="1">In infected CD4(+) T-lymphocytes, down-regulates the surface MHC-I, mature MHC-II, CD4, CD28, CCR5 and CXCR4 molecules. Mediates internalization and degradation of host CD4 through the interaction of with the cytoplasmic tail of CD4, the recruitment of AP-2 (clathrin adapter protein complex 2), internalization through clathrin coated pits, and subsequent transport to endosomes and lysosomes for degradation. Diverts host MHC-I molecules to the trans-Golgi network-associated endosomal compartments by an endocytic pathway to finally target them for degradation. MHC-I down-regulation may involve AP-1 (clathrin adapter protein complex 1) or possibly Src family kinase-ZAP70/Syk-PI3K cascade recruited by PACS2. In consequence infected cells are masked for immune recognition by cytotoxic T-lymphocytes. Decreasing the number of immune receptors also prevents reinfection by more HIV particles (superinfection). Down-regulates host SERINC3 and SERINC5 thereby excluding these proteins from the viral particles. Virion infectivity is drastically higher when SERINC3 or SERINC5 are excluded from the viral envelope, because these host antiviral proteins impair the membrane fusion event necessary for subsequent virion penetration.</text>
</comment>
<comment type="function">
    <text evidence="1">Bypasses host T-cell signaling by inducing a transcriptional program nearly identical to that of anti-CD3 cell activation. Interaction with TCR-zeta chain up-regulates the Fas ligand (FasL). Increasing surface FasL molecules and decreasing surface MHC-I molecules on infected CD4(+) cells send attacking cytotoxic CD8+ T-lymphocytes into apoptosis.</text>
</comment>
<comment type="function">
    <text evidence="1">Plays a role in optimizing the host cell environment for viral replication without causing cell death by apoptosis. Protects the infected cells from apoptosis in order to keep them alive until the next virus generation is ready to strike. Inhibits the Fas and TNFR-mediated death signals by blocking MAP3K5/ASK1. Decreases the half-life of TP53, protecting the infected cell against p53-mediated apoptosis. Inhibits the apoptotic signals regulated by the Bcl-2 family proteins through the formation of a Nef/PI3-kinase/PAK2 complex that leads to activation of PAK2 and induces phosphorylation of host BAD.</text>
</comment>
<comment type="function">
    <text evidence="1">Extracellular Nef protein targets CD4(+) T-lymphocytes for apoptosis by interacting with CXCR4 surface receptors.</text>
</comment>
<comment type="subunit">
    <text evidence="1">Monomer; cytosolic form. Homodimer; membrane bound form. Interacts with Nef associated p21-activated kinase (PAK2); this interaction activates PAK2. Associates with the Nef-MHC-I-AP1 complex; this complex is required for MHC-I internalization. Interacts (via C-terminus) with host PI3-kinase. Interacts with host PACS1; this interaction seems to be weak. Interacts with host PACS2. Interacts with host LCK and MAPK3; these interactions inhibit the kinase activity of the latter. Interacts with host ATP6V1H; this interaction may play a role in CD4 endocytosis. Associates with the CD4-Nef-AP2 complex; this complex is required for CD4 internalization. Interacts with host AP2 subunit alpha and AP2 subunit sigma2. Interacts with TCR-zeta chain; this interaction up-regulates the Fas ligand (FasL) surface expression. Interacts with host HCK, LYN, and SRC; these interactions activate the Src family kinases. Interacts with MAP3K5; this interaction inhibits the Fas and TNFR-mediated death signals. Interacts with beta-COP and PTE1. Interacts with human RACK1; this increases Nef phosphorylation by PKC. Interacts with TP53; this interaction decreases the half-life of TP53, protecting the infected cell against p53-mediated apoptosis.</text>
</comment>
<comment type="subcellular location">
    <subcellularLocation>
        <location evidence="1">Host cell membrane</location>
        <topology evidence="1">Lipid-anchor</topology>
        <orientation evidence="1">Cytoplasmic side</orientation>
    </subcellularLocation>
    <subcellularLocation>
        <location evidence="1">Virion</location>
    </subcellularLocation>
    <subcellularLocation>
        <location evidence="1">Secreted</location>
    </subcellularLocation>
    <subcellularLocation>
        <location evidence="1">Host Golgi apparatus membrane</location>
    </subcellularLocation>
    <text evidence="1">TGN localization requires PACS1. Associates with the inner plasma membrane through its N-terminal domain. Nef stimulates its own export via the release of exosomes. Incorporated in virions at a rate of about 10 molecules per virion, where it is cleaved.</text>
</comment>
<comment type="induction">
    <text evidence="1">Expressed early in the viral replication cycle.</text>
</comment>
<comment type="domain">
    <text evidence="1">The N-terminal domain is composed of the N-myristoyl glycine and of a cluster of positively charged amino acids. It is required for inner plasma membrane targeting of Nef and virion incorporation, and thereby for infectivity. This domain is also involved in binding to TP53.</text>
</comment>
<comment type="domain">
    <text evidence="1">The SH3-binding domain constituted of PxxP motifs mediates binding to several Src family proteins thereby regulating their tyrosine kinase activity. The same motifs also mediates the association with MAPK3, PI3-kinase and TCR-zeta.</text>
</comment>
<comment type="domain">
    <text evidence="1">The dileucine internalization motif and a diacidic motif seem to be required for binding to AP-2.</text>
</comment>
<comment type="domain">
    <text evidence="1">The acidic region binds to the sorting protein PACS-2, which targets Nef to the paranuclear region, enabling the PxxP motif to direct assembly of an SFK/ZAP-70/PI3K complex that accelerates endocytosis of cell-surface MHC-I.</text>
</comment>
<comment type="PTM">
    <text evidence="1">The virion-associated Nef proteins are cleaved by the viral protease to release the soluble C-terminal core protein. Nef is probably cleaved concomitantly with viral structural proteins on maturation of virus particles.</text>
</comment>
<comment type="PTM">
    <text evidence="1">Myristoylated.</text>
</comment>
<comment type="PTM">
    <text evidence="1">Phosphorylated on serine residues, probably by host PKCdelta and theta.</text>
</comment>
<comment type="miscellaneous">
    <text evidence="1">HIV-1 lineages are divided in three main groups, M (for Major), O (for Outlier), and N (for New, or Non-M, Non-O). The vast majority of strains found worldwide belong to the group M. Group O seems to be endemic to and largely confined to Cameroon and neighboring countries in West Central Africa, where these viruses represent a small minority of HIV-1 strains. The group N is represented by a limited number of isolates from Cameroonian persons. The group M is further subdivided in 9 clades or subtypes (A to D, F to H, J and K).</text>
</comment>
<comment type="similarity">
    <text evidence="1">Belongs to the lentivirus primate group Nef protein family.</text>
</comment>
<gene>
    <name evidence="1" type="primary">nef</name>
</gene>
<organismHost>
    <name type="scientific">Homo sapiens</name>
    <name type="common">Human</name>
    <dbReference type="NCBI Taxonomy" id="9606"/>
</organismHost>
<organism>
    <name type="scientific">Human immunodeficiency virus type 1 group M subtype B (isolate HXB3)</name>
    <name type="common">HIV-1</name>
    <dbReference type="NCBI Taxonomy" id="11707"/>
    <lineage>
        <taxon>Viruses</taxon>
        <taxon>Riboviria</taxon>
        <taxon>Pararnavirae</taxon>
        <taxon>Artverviricota</taxon>
        <taxon>Revtraviricetes</taxon>
        <taxon>Ortervirales</taxon>
        <taxon>Retroviridae</taxon>
        <taxon>Orthoretrovirinae</taxon>
        <taxon>Lentivirus</taxon>
        <taxon>Human immunodeficiency virus type 1</taxon>
    </lineage>
</organism>
<accession>P05854</accession>
<accession>Q85588</accession>
<feature type="initiator methionine" description="Removed; by host" evidence="1">
    <location>
        <position position="1"/>
    </location>
</feature>
<feature type="chain" id="PRO_0000038367" description="Protein Nef" evidence="1">
    <location>
        <begin position="2"/>
        <end position="206"/>
    </location>
</feature>
<feature type="chain" id="PRO_0000038368" description="C-terminal core protein" evidence="1">
    <location>
        <begin position="58"/>
        <end position="206"/>
    </location>
</feature>
<feature type="region of interest" description="Acidic; interacts with host PACS1 and PACS2; stabilizes the interaction of NEF/MHC-I with host AP1M1; necessary for MHC-I internalization" evidence="1">
    <location>
        <begin position="62"/>
        <end position="65"/>
    </location>
</feature>
<feature type="region of interest" description="SH3-binding; interaction with Src family tyrosine kinases" evidence="1">
    <location>
        <begin position="69"/>
        <end position="78"/>
    </location>
</feature>
<feature type="region of interest" description="Mediates dimerization, Nef-PTE1 interaction" evidence="1">
    <location>
        <begin position="108"/>
        <end position="124"/>
    </location>
</feature>
<feature type="region of interest" description="Binding to ATP6V1H" evidence="1">
    <location>
        <begin position="148"/>
        <end position="180"/>
    </location>
</feature>
<feature type="short sequence motif" description="PxxP; stabilizes the interaction of NEF/MHC-I with host AP1M1; necessary for MHC-I internalization" evidence="1">
    <location>
        <begin position="72"/>
        <end position="75"/>
    </location>
</feature>
<feature type="short sequence motif" description="Dileucine internalization motif; necessary for CD4 internalization" evidence="1">
    <location>
        <begin position="164"/>
        <end position="165"/>
    </location>
</feature>
<feature type="short sequence motif" description="Diacidic; necessary for CD4 internalization" evidence="1">
    <location>
        <begin position="174"/>
        <end position="175"/>
    </location>
</feature>
<feature type="site" description="Might play a role in AP-1 recruitment to the Nef-MHC-I complex" evidence="1">
    <location>
        <position position="20"/>
    </location>
</feature>
<feature type="site" description="Cleavage; by viral protease" evidence="1">
    <location>
        <begin position="57"/>
        <end position="58"/>
    </location>
</feature>
<feature type="modified residue" description="Phosphoserine; by host" evidence="1">
    <location>
        <position position="6"/>
    </location>
</feature>
<feature type="lipid moiety-binding region" description="N-myristoyl glycine; by host" evidence="1 2">
    <location>
        <position position="2"/>
    </location>
</feature>
<feature type="mutagenesis site" description="Complete loss of myristoylation." evidence="2">
    <original>G</original>
    <variation>A</variation>
    <location>
        <position position="2"/>
    </location>
</feature>
<reference key="1">
    <citation type="journal article" date="1985" name="Nucleic Acids Res.">
        <title>Polymorphism of the 3' open reading frame of the virus associated with the acquired immune deficiency syndrome, human T-lymphotropic virus type III.</title>
        <authorList>
            <person name="Ratner L."/>
            <person name="Starcich B.R."/>
            <person name="Josephs S.F."/>
            <person name="Hahn B.H."/>
            <person name="Reddy E.P."/>
            <person name="Livak K.J."/>
            <person name="Petteway S.R. Jr."/>
            <person name="Pearson M.L."/>
            <person name="Haseltine W.A."/>
            <person name="Arya S.K."/>
            <person name="Wong-staal F."/>
        </authorList>
    </citation>
    <scope>NUCLEOTIDE SEQUENCE [GENOMIC RNA]</scope>
</reference>
<reference key="2">
    <citation type="journal article" date="1985" name="Cell">
        <title>HTLV-III env gene products synthesized in E. coli are recognized by antibodies present in the sera of AIDS patients.</title>
        <authorList>
            <person name="Crowl R."/>
            <person name="Ganguly K."/>
            <person name="Gordon M."/>
            <person name="Conroy R."/>
            <person name="Schaber M."/>
            <person name="Kramer R."/>
            <person name="Shaw G.M."/>
            <person name="Wong-Staal F."/>
            <person name="Reddy E.P."/>
        </authorList>
    </citation>
    <scope>NUCLEOTIDE SEQUENCE [GENOMIC RNA] OF 1-35</scope>
</reference>
<reference key="3">
    <citation type="journal article" date="1992" name="Virology">
        <title>Effect of myristoylation on p27 nef subcellular distribution and suppression of HIV-LTR transcription.</title>
        <authorList>
            <person name="Yu G."/>
            <person name="Felsted R.L."/>
        </authorList>
    </citation>
    <scope>MYRISTOYLATION AT GLY-2</scope>
    <scope>MUTAGENESIS OF GLY-2</scope>
</reference>
<keyword id="KW-0014">AIDS</keyword>
<keyword id="KW-0053">Apoptosis</keyword>
<keyword id="KW-0244">Early protein</keyword>
<keyword id="KW-1032">Host cell membrane</keyword>
<keyword id="KW-1040">Host Golgi apparatus</keyword>
<keyword id="KW-1043">Host membrane</keyword>
<keyword id="KW-0945">Host-virus interaction</keyword>
<keyword id="KW-1080">Inhibition of host adaptive immune response by virus</keyword>
<keyword id="KW-1083">Inhibition of host autophagy by virus</keyword>
<keyword id="KW-1115">Inhibition of host MHC class I molecule presentation by virus</keyword>
<keyword id="KW-1116">Inhibition of host MHC class II molecule presentation by virus</keyword>
<keyword id="KW-0449">Lipoprotein</keyword>
<keyword id="KW-0472">Membrane</keyword>
<keyword id="KW-0519">Myristate</keyword>
<keyword id="KW-0597">Phosphoprotein</keyword>
<keyword id="KW-0964">Secreted</keyword>
<keyword id="KW-0729">SH3-binding</keyword>
<keyword id="KW-0899">Viral immunoevasion</keyword>
<keyword id="KW-0946">Virion</keyword>
<keyword id="KW-0843">Virulence</keyword>
<sequence length="206" mass="23419">MGGKWSKSSVVGWPAVRERMRRAEPAADGVGAASRDLEKHGAITSSNTAANNAACAWLEAQEEEKVGFPVTPQVPLRPMTYKAAVDLSHFLKEKGGLEGLIHSQRRQDILDLWIYHTQGYFPDWQNYTPGPGIRYPLTFGWRYKLVPVEPEKLEEANKGENTSLLHPVSLHGMDDPEREVLEWRFDSRLAFHHVARELHPEYFKNC</sequence>
<protein>
    <recommendedName>
        <fullName evidence="1">Protein Nef</fullName>
    </recommendedName>
    <alternativeName>
        <fullName evidence="1">3'ORF</fullName>
    </alternativeName>
    <alternativeName>
        <fullName evidence="1">Negative factor</fullName>
        <shortName evidence="1">F-protein</shortName>
    </alternativeName>
    <component>
        <recommendedName>
            <fullName evidence="1">C-terminal core protein</fullName>
        </recommendedName>
    </component>
</protein>
<evidence type="ECO:0000255" key="1">
    <source>
        <dbReference type="HAMAP-Rule" id="MF_04078"/>
    </source>
</evidence>
<evidence type="ECO:0000269" key="2">
    <source>
    </source>
</evidence>
<name>NEF_HV1H3</name>
<dbReference type="EMBL" id="X03188">
    <property type="protein sequence ID" value="CAA26947.1"/>
    <property type="molecule type" value="Genomic_RNA"/>
</dbReference>
<dbReference type="EMBL" id="M14100">
    <property type="protein sequence ID" value="AAA44680.1"/>
    <property type="molecule type" value="Genomic_RNA"/>
</dbReference>
<dbReference type="BMRB" id="P05854"/>
<dbReference type="SMR" id="P05854"/>
<dbReference type="iPTMnet" id="P05854"/>
<dbReference type="GO" id="GO:0005576">
    <property type="term" value="C:extracellular region"/>
    <property type="evidence" value="ECO:0007669"/>
    <property type="project" value="UniProtKB-SubCell"/>
</dbReference>
<dbReference type="GO" id="GO:0044178">
    <property type="term" value="C:host cell Golgi membrane"/>
    <property type="evidence" value="ECO:0007669"/>
    <property type="project" value="UniProtKB-SubCell"/>
</dbReference>
<dbReference type="GO" id="GO:0020002">
    <property type="term" value="C:host cell plasma membrane"/>
    <property type="evidence" value="ECO:0007669"/>
    <property type="project" value="UniProtKB-SubCell"/>
</dbReference>
<dbReference type="GO" id="GO:0016020">
    <property type="term" value="C:membrane"/>
    <property type="evidence" value="ECO:0007669"/>
    <property type="project" value="UniProtKB-UniRule"/>
</dbReference>
<dbReference type="GO" id="GO:0044423">
    <property type="term" value="C:virion component"/>
    <property type="evidence" value="ECO:0007669"/>
    <property type="project" value="UniProtKB-UniRule"/>
</dbReference>
<dbReference type="GO" id="GO:0005525">
    <property type="term" value="F:GTP binding"/>
    <property type="evidence" value="ECO:0007669"/>
    <property type="project" value="UniProtKB-UniRule"/>
</dbReference>
<dbReference type="GO" id="GO:0017124">
    <property type="term" value="F:SH3 domain binding"/>
    <property type="evidence" value="ECO:0007669"/>
    <property type="project" value="UniProtKB-UniRule"/>
</dbReference>
<dbReference type="GO" id="GO:0046776">
    <property type="term" value="P:symbiont-mediated suppression of host antigen processing and presentation of peptide antigen via MHC class I"/>
    <property type="evidence" value="ECO:0007669"/>
    <property type="project" value="UniProtKB-UniRule"/>
</dbReference>
<dbReference type="GO" id="GO:0039505">
    <property type="term" value="P:symbiont-mediated suppression of host antigen processing and presentation of peptide antigen via MHC class II"/>
    <property type="evidence" value="ECO:0007669"/>
    <property type="project" value="UniProtKB-UniRule"/>
</dbReference>
<dbReference type="GO" id="GO:0140321">
    <property type="term" value="P:symbiont-mediated suppression of host autophagy"/>
    <property type="evidence" value="ECO:0007669"/>
    <property type="project" value="UniProtKB-KW"/>
</dbReference>
<dbReference type="FunFam" id="3.30.62.10:FF:000001">
    <property type="entry name" value="Protein Nef"/>
    <property type="match status" value="1"/>
</dbReference>
<dbReference type="FunFam" id="4.10.890.10:FF:000001">
    <property type="entry name" value="Protein Nef"/>
    <property type="match status" value="1"/>
</dbReference>
<dbReference type="Gene3D" id="4.10.890.10">
    <property type="entry name" value="HIV 1 nef anchor domain"/>
    <property type="match status" value="1"/>
</dbReference>
<dbReference type="Gene3D" id="3.30.62.10">
    <property type="entry name" value="Nef Regulatory Factor"/>
    <property type="match status" value="1"/>
</dbReference>
<dbReference type="HAMAP" id="MF_04078">
    <property type="entry name" value="NEF_HIV"/>
    <property type="match status" value="1"/>
</dbReference>
<dbReference type="InterPro" id="IPR027480">
    <property type="entry name" value="HIV-1_Nef_anchor_sf"/>
</dbReference>
<dbReference type="InterPro" id="IPR027481">
    <property type="entry name" value="HIV-1_Nef_core_sf"/>
</dbReference>
<dbReference type="InterPro" id="IPR001558">
    <property type="entry name" value="HIV_Nef"/>
</dbReference>
<dbReference type="Pfam" id="PF00469">
    <property type="entry name" value="F-protein"/>
    <property type="match status" value="1"/>
</dbReference>
<dbReference type="SUPFAM" id="SSF55671">
    <property type="entry name" value="Regulatory factor Nef"/>
    <property type="match status" value="1"/>
</dbReference>
<proteinExistence type="evidence at protein level"/>